<sequence>MADKFDANDETRTVYAVVYDNDQPVSTGQFLAETKIEARLTRIVTLADYCGCGYGAKVTEALETYTRREGFYQLTIHSELTAQTFYENLGYQSYGPKCLEDGEYCQSLAKTILKWEKNMDIAMLIAIVGGLLGCYLYLTKNN</sequence>
<gene>
    <name type="ordered locus">SPy_1546</name>
    <name type="ordered locus">M5005_Spy1274</name>
</gene>
<proteinExistence type="inferred from homology"/>
<organism>
    <name type="scientific">Streptococcus pyogenes serotype M1</name>
    <dbReference type="NCBI Taxonomy" id="301447"/>
    <lineage>
        <taxon>Bacteria</taxon>
        <taxon>Bacillati</taxon>
        <taxon>Bacillota</taxon>
        <taxon>Bacilli</taxon>
        <taxon>Lactobacillales</taxon>
        <taxon>Streptococcaceae</taxon>
        <taxon>Streptococcus</taxon>
    </lineage>
</organism>
<dbReference type="EC" id="2.3.1.-"/>
<dbReference type="EMBL" id="AE004092">
    <property type="protein sequence ID" value="AAK34338.1"/>
    <property type="molecule type" value="Genomic_DNA"/>
</dbReference>
<dbReference type="EMBL" id="CP000017">
    <property type="protein sequence ID" value="AAZ51892.1"/>
    <property type="molecule type" value="Genomic_DNA"/>
</dbReference>
<dbReference type="RefSeq" id="NP_269617.1">
    <property type="nucleotide sequence ID" value="NC_002737.2"/>
</dbReference>
<dbReference type="SMR" id="P0C0H5"/>
<dbReference type="PaxDb" id="1314-HKU360_01315"/>
<dbReference type="KEGG" id="spy:SPy_1546"/>
<dbReference type="KEGG" id="spz:M5005_Spy1274"/>
<dbReference type="PATRIC" id="fig|160490.10.peg.1351"/>
<dbReference type="HOGENOM" id="CLU_056607_9_0_9"/>
<dbReference type="OMA" id="TYARQEG"/>
<dbReference type="Proteomes" id="UP000000750">
    <property type="component" value="Chromosome"/>
</dbReference>
<dbReference type="GO" id="GO:0016747">
    <property type="term" value="F:acyltransferase activity, transferring groups other than amino-acyl groups"/>
    <property type="evidence" value="ECO:0007669"/>
    <property type="project" value="InterPro"/>
</dbReference>
<dbReference type="Gene3D" id="3.40.630.30">
    <property type="match status" value="1"/>
</dbReference>
<dbReference type="InterPro" id="IPR016181">
    <property type="entry name" value="Acyl_CoA_acyltransferase"/>
</dbReference>
<dbReference type="InterPro" id="IPR000182">
    <property type="entry name" value="GNAT_dom"/>
</dbReference>
<dbReference type="Pfam" id="PF13673">
    <property type="entry name" value="Acetyltransf_10"/>
    <property type="match status" value="1"/>
</dbReference>
<dbReference type="SUPFAM" id="SSF55729">
    <property type="entry name" value="Acyl-CoA N-acyltransferases (Nat)"/>
    <property type="match status" value="1"/>
</dbReference>
<dbReference type="PROSITE" id="PS51186">
    <property type="entry name" value="GNAT"/>
    <property type="match status" value="1"/>
</dbReference>
<comment type="similarity">
    <text evidence="2">Belongs to the acetyltransferase family.</text>
</comment>
<reference key="1">
    <citation type="journal article" date="2001" name="Proc. Natl. Acad. Sci. U.S.A.">
        <title>Complete genome sequence of an M1 strain of Streptococcus pyogenes.</title>
        <authorList>
            <person name="Ferretti J.J."/>
            <person name="McShan W.M."/>
            <person name="Ajdic D.J."/>
            <person name="Savic D.J."/>
            <person name="Savic G."/>
            <person name="Lyon K."/>
            <person name="Primeaux C."/>
            <person name="Sezate S."/>
            <person name="Suvorov A.N."/>
            <person name="Kenton S."/>
            <person name="Lai H.S."/>
            <person name="Lin S.P."/>
            <person name="Qian Y."/>
            <person name="Jia H.G."/>
            <person name="Najar F.Z."/>
            <person name="Ren Q."/>
            <person name="Zhu H."/>
            <person name="Song L."/>
            <person name="White J."/>
            <person name="Yuan X."/>
            <person name="Clifton S.W."/>
            <person name="Roe B.A."/>
            <person name="McLaughlin R.E."/>
        </authorList>
    </citation>
    <scope>NUCLEOTIDE SEQUENCE [LARGE SCALE GENOMIC DNA]</scope>
    <source>
        <strain>ATCC 700294 / SF370 / Serotype M1</strain>
    </source>
</reference>
<reference key="2">
    <citation type="journal article" date="2005" name="J. Infect. Dis.">
        <title>Evolutionary origin and emergence of a highly successful clone of serotype M1 group A Streptococcus involved multiple horizontal gene transfer events.</title>
        <authorList>
            <person name="Sumby P."/>
            <person name="Porcella S.F."/>
            <person name="Madrigal A.G."/>
            <person name="Barbian K.D."/>
            <person name="Virtaneva K."/>
            <person name="Ricklefs S.M."/>
            <person name="Sturdevant D.E."/>
            <person name="Graham M.R."/>
            <person name="Vuopio-Varkila J."/>
            <person name="Hoe N.P."/>
            <person name="Musser J.M."/>
        </authorList>
    </citation>
    <scope>NUCLEOTIDE SEQUENCE [LARGE SCALE GENOMIC DNA]</scope>
    <source>
        <strain>ATCC BAA-947 / MGAS5005 / Serotype M1</strain>
    </source>
</reference>
<accession>P0C0H5</accession>
<accession>P16963</accession>
<accession>Q48XN3</accession>
<evidence type="ECO:0000255" key="1">
    <source>
        <dbReference type="PROSITE-ProRule" id="PRU00532"/>
    </source>
</evidence>
<evidence type="ECO:0000305" key="2"/>
<protein>
    <recommendedName>
        <fullName>Uncharacterized acetyltransferase SPy_1546/M5005_Spy1274</fullName>
        <ecNumber>2.3.1.-</ecNumber>
    </recommendedName>
</protein>
<feature type="chain" id="PRO_0000205420" description="Uncharacterized acetyltransferase SPy_1546/M5005_Spy1274">
    <location>
        <begin position="1"/>
        <end position="142"/>
    </location>
</feature>
<feature type="domain" description="N-acetyltransferase" evidence="1">
    <location>
        <begin position="1"/>
        <end position="120"/>
    </location>
</feature>
<keyword id="KW-0012">Acyltransferase</keyword>
<keyword id="KW-1185">Reference proteome</keyword>
<keyword id="KW-0808">Transferase</keyword>
<name>Y1546_STRP1</name>